<gene>
    <name type="primary">cbrB</name>
    <name type="ordered locus">SFV_3795</name>
</gene>
<comment type="subcellular location">
    <subcellularLocation>
        <location evidence="1">Cell inner membrane</location>
        <topology evidence="1">Multi-pass membrane protein</topology>
    </subcellularLocation>
</comment>
<comment type="similarity">
    <text evidence="3">Belongs to the CbrB family.</text>
</comment>
<organism>
    <name type="scientific">Shigella flexneri serotype 5b (strain 8401)</name>
    <dbReference type="NCBI Taxonomy" id="373384"/>
    <lineage>
        <taxon>Bacteria</taxon>
        <taxon>Pseudomonadati</taxon>
        <taxon>Pseudomonadota</taxon>
        <taxon>Gammaproteobacteria</taxon>
        <taxon>Enterobacterales</taxon>
        <taxon>Enterobacteriaceae</taxon>
        <taxon>Shigella</taxon>
    </lineage>
</organism>
<keyword id="KW-0997">Cell inner membrane</keyword>
<keyword id="KW-1003">Cell membrane</keyword>
<keyword id="KW-0472">Membrane</keyword>
<keyword id="KW-0812">Transmembrane</keyword>
<keyword id="KW-1133">Transmembrane helix</keyword>
<reference key="1">
    <citation type="journal article" date="2006" name="BMC Genomics">
        <title>Complete genome sequence of Shigella flexneri 5b and comparison with Shigella flexneri 2a.</title>
        <authorList>
            <person name="Nie H."/>
            <person name="Yang F."/>
            <person name="Zhang X."/>
            <person name="Yang J."/>
            <person name="Chen L."/>
            <person name="Wang J."/>
            <person name="Xiong Z."/>
            <person name="Peng J."/>
            <person name="Sun L."/>
            <person name="Dong J."/>
            <person name="Xue Y."/>
            <person name="Xu X."/>
            <person name="Chen S."/>
            <person name="Yao Z."/>
            <person name="Shen Y."/>
            <person name="Jin Q."/>
        </authorList>
    </citation>
    <scope>NUCLEOTIDE SEQUENCE [LARGE SCALE GENOMIC DNA]</scope>
    <source>
        <strain>8401</strain>
    </source>
</reference>
<accession>Q0SYQ7</accession>
<proteinExistence type="inferred from homology"/>
<feature type="chain" id="PRO_0000320705" description="Inner membrane protein CbrB">
    <location>
        <begin position="1"/>
        <end position="157"/>
    </location>
</feature>
<feature type="topological domain" description="Cytoplasmic" evidence="2">
    <location>
        <begin position="1"/>
        <end position="11"/>
    </location>
</feature>
<feature type="transmembrane region" description="Helical" evidence="2">
    <location>
        <begin position="12"/>
        <end position="32"/>
    </location>
</feature>
<feature type="topological domain" description="Periplasmic" evidence="2">
    <location>
        <begin position="33"/>
        <end position="36"/>
    </location>
</feature>
<feature type="transmembrane region" description="Helical" evidence="2">
    <location>
        <begin position="37"/>
        <end position="57"/>
    </location>
</feature>
<feature type="topological domain" description="Cytoplasmic" evidence="2">
    <location>
        <begin position="58"/>
        <end position="83"/>
    </location>
</feature>
<feature type="transmembrane region" description="Helical" evidence="2">
    <location>
        <begin position="84"/>
        <end position="104"/>
    </location>
</feature>
<feature type="topological domain" description="Periplasmic" evidence="2">
    <location>
        <begin position="105"/>
        <end position="115"/>
    </location>
</feature>
<feature type="transmembrane region" description="Helical" evidence="2">
    <location>
        <begin position="116"/>
        <end position="136"/>
    </location>
</feature>
<feature type="topological domain" description="Cytoplasmic" evidence="2">
    <location>
        <begin position="137"/>
        <end position="157"/>
    </location>
</feature>
<name>CBRB_SHIF8</name>
<sequence>MSVSRRVIHHGLYFAVLGPLIGVLFLVLYIFFAKEPLVLLVIIQVLPLFLLLSITTGAIPALLTGVMVACLPEKIGSQKNYRCLAGGIGGVVITEIYCAVIVHIKGMASSELFENILSGDSLVVRIIPALLAGVVMSRIITRLPGLDISCPETDSLS</sequence>
<dbReference type="EMBL" id="CP000266">
    <property type="protein sequence ID" value="ABF05808.1"/>
    <property type="molecule type" value="Genomic_DNA"/>
</dbReference>
<dbReference type="RefSeq" id="WP_000116772.1">
    <property type="nucleotide sequence ID" value="NC_008258.1"/>
</dbReference>
<dbReference type="KEGG" id="sfv:SFV_3795"/>
<dbReference type="HOGENOM" id="CLU_139024_0_0_6"/>
<dbReference type="Proteomes" id="UP000000659">
    <property type="component" value="Chromosome"/>
</dbReference>
<dbReference type="GO" id="GO:0005886">
    <property type="term" value="C:plasma membrane"/>
    <property type="evidence" value="ECO:0007669"/>
    <property type="project" value="UniProtKB-SubCell"/>
</dbReference>
<dbReference type="NCBIfam" id="NF007334">
    <property type="entry name" value="PRK09823.1"/>
    <property type="match status" value="1"/>
</dbReference>
<evidence type="ECO:0000250" key="1"/>
<evidence type="ECO:0000255" key="2"/>
<evidence type="ECO:0000305" key="3"/>
<protein>
    <recommendedName>
        <fullName>Inner membrane protein CbrB</fullName>
    </recommendedName>
</protein>